<evidence type="ECO:0000255" key="1">
    <source>
        <dbReference type="HAMAP-Rule" id="MF_00500"/>
    </source>
</evidence>
<evidence type="ECO:0000256" key="2">
    <source>
        <dbReference type="SAM" id="MobiDB-lite"/>
    </source>
</evidence>
<evidence type="ECO:0000305" key="3"/>
<sequence length="87" mass="9530">MANIKSAKKRAIQSEKRRQHNASRRSMTRTYLKKVIAAIASGDKAAAVAAFATAQPIMDRMATKGLIHKNKAARHKSRLSAQIKAMA</sequence>
<protein>
    <recommendedName>
        <fullName evidence="1">Small ribosomal subunit protein bS20</fullName>
    </recommendedName>
    <alternativeName>
        <fullName evidence="3">30S ribosomal protein S20</fullName>
    </alternativeName>
</protein>
<organism>
    <name type="scientific">Aeromonas salmonicida (strain A449)</name>
    <dbReference type="NCBI Taxonomy" id="382245"/>
    <lineage>
        <taxon>Bacteria</taxon>
        <taxon>Pseudomonadati</taxon>
        <taxon>Pseudomonadota</taxon>
        <taxon>Gammaproteobacteria</taxon>
        <taxon>Aeromonadales</taxon>
        <taxon>Aeromonadaceae</taxon>
        <taxon>Aeromonas</taxon>
    </lineage>
</organism>
<keyword id="KW-0687">Ribonucleoprotein</keyword>
<keyword id="KW-0689">Ribosomal protein</keyword>
<keyword id="KW-0694">RNA-binding</keyword>
<keyword id="KW-0699">rRNA-binding</keyword>
<dbReference type="EMBL" id="CP000644">
    <property type="protein sequence ID" value="ABO88844.1"/>
    <property type="molecule type" value="Genomic_DNA"/>
</dbReference>
<dbReference type="RefSeq" id="WP_005892298.1">
    <property type="nucleotide sequence ID" value="NC_009348.1"/>
</dbReference>
<dbReference type="SMR" id="A4SIX2"/>
<dbReference type="STRING" id="29491.GCA_000820065_01813"/>
<dbReference type="GeneID" id="92724950"/>
<dbReference type="KEGG" id="asa:ASA_0681"/>
<dbReference type="eggNOG" id="COG0268">
    <property type="taxonomic scope" value="Bacteria"/>
</dbReference>
<dbReference type="HOGENOM" id="CLU_160655_4_0_6"/>
<dbReference type="Proteomes" id="UP000000225">
    <property type="component" value="Chromosome"/>
</dbReference>
<dbReference type="GO" id="GO:0005829">
    <property type="term" value="C:cytosol"/>
    <property type="evidence" value="ECO:0007669"/>
    <property type="project" value="TreeGrafter"/>
</dbReference>
<dbReference type="GO" id="GO:0015935">
    <property type="term" value="C:small ribosomal subunit"/>
    <property type="evidence" value="ECO:0007669"/>
    <property type="project" value="TreeGrafter"/>
</dbReference>
<dbReference type="GO" id="GO:0070181">
    <property type="term" value="F:small ribosomal subunit rRNA binding"/>
    <property type="evidence" value="ECO:0007669"/>
    <property type="project" value="TreeGrafter"/>
</dbReference>
<dbReference type="GO" id="GO:0003735">
    <property type="term" value="F:structural constituent of ribosome"/>
    <property type="evidence" value="ECO:0007669"/>
    <property type="project" value="InterPro"/>
</dbReference>
<dbReference type="GO" id="GO:0006412">
    <property type="term" value="P:translation"/>
    <property type="evidence" value="ECO:0007669"/>
    <property type="project" value="UniProtKB-UniRule"/>
</dbReference>
<dbReference type="FunFam" id="1.20.58.110:FF:000001">
    <property type="entry name" value="30S ribosomal protein S20"/>
    <property type="match status" value="1"/>
</dbReference>
<dbReference type="Gene3D" id="1.20.58.110">
    <property type="entry name" value="Ribosomal protein S20"/>
    <property type="match status" value="1"/>
</dbReference>
<dbReference type="HAMAP" id="MF_00500">
    <property type="entry name" value="Ribosomal_bS20"/>
    <property type="match status" value="1"/>
</dbReference>
<dbReference type="InterPro" id="IPR002583">
    <property type="entry name" value="Ribosomal_bS20"/>
</dbReference>
<dbReference type="InterPro" id="IPR036510">
    <property type="entry name" value="Ribosomal_bS20_sf"/>
</dbReference>
<dbReference type="NCBIfam" id="TIGR00029">
    <property type="entry name" value="S20"/>
    <property type="match status" value="1"/>
</dbReference>
<dbReference type="PANTHER" id="PTHR33398">
    <property type="entry name" value="30S RIBOSOMAL PROTEIN S20"/>
    <property type="match status" value="1"/>
</dbReference>
<dbReference type="PANTHER" id="PTHR33398:SF1">
    <property type="entry name" value="SMALL RIBOSOMAL SUBUNIT PROTEIN BS20C"/>
    <property type="match status" value="1"/>
</dbReference>
<dbReference type="Pfam" id="PF01649">
    <property type="entry name" value="Ribosomal_S20p"/>
    <property type="match status" value="1"/>
</dbReference>
<dbReference type="SUPFAM" id="SSF46992">
    <property type="entry name" value="Ribosomal protein S20"/>
    <property type="match status" value="1"/>
</dbReference>
<comment type="function">
    <text evidence="1">Binds directly to 16S ribosomal RNA.</text>
</comment>
<comment type="similarity">
    <text evidence="1">Belongs to the bacterial ribosomal protein bS20 family.</text>
</comment>
<name>RS20_AERS4</name>
<gene>
    <name evidence="1" type="primary">rpsT</name>
    <name type="ordered locus">ASA_0681</name>
</gene>
<reference key="1">
    <citation type="journal article" date="2008" name="BMC Genomics">
        <title>The genome of Aeromonas salmonicida subsp. salmonicida A449: insights into the evolution of a fish pathogen.</title>
        <authorList>
            <person name="Reith M.E."/>
            <person name="Singh R.K."/>
            <person name="Curtis B."/>
            <person name="Boyd J.M."/>
            <person name="Bouevitch A."/>
            <person name="Kimball J."/>
            <person name="Munholland J."/>
            <person name="Murphy C."/>
            <person name="Sarty D."/>
            <person name="Williams J."/>
            <person name="Nash J.H."/>
            <person name="Johnson S.C."/>
            <person name="Brown L.L."/>
        </authorList>
    </citation>
    <scope>NUCLEOTIDE SEQUENCE [LARGE SCALE GENOMIC DNA]</scope>
    <source>
        <strain>A449</strain>
    </source>
</reference>
<feature type="chain" id="PRO_1000014542" description="Small ribosomal subunit protein bS20">
    <location>
        <begin position="1"/>
        <end position="87"/>
    </location>
</feature>
<feature type="region of interest" description="Disordered" evidence="2">
    <location>
        <begin position="1"/>
        <end position="27"/>
    </location>
</feature>
<accession>A4SIX2</accession>
<proteinExistence type="inferred from homology"/>